<comment type="function">
    <text evidence="1">Involved in the proteasome-dependent degradation of fructose-1,6-bisphosphatase.</text>
</comment>
<comment type="subcellular location">
    <subcellularLocation>
        <location evidence="1">Cytoplasm</location>
    </subcellularLocation>
    <subcellularLocation>
        <location evidence="1">Nucleus</location>
    </subcellularLocation>
</comment>
<comment type="similarity">
    <text evidence="5">Belongs to the FYV10 family.</text>
</comment>
<comment type="sequence caution" evidence="5">
    <conflict type="erroneous gene model prediction">
        <sequence resource="EMBL-CDS" id="EAU30596"/>
    </conflict>
</comment>
<evidence type="ECO:0000250" key="1"/>
<evidence type="ECO:0000255" key="2">
    <source>
        <dbReference type="PROSITE-ProRule" id="PRU00058"/>
    </source>
</evidence>
<evidence type="ECO:0000255" key="3">
    <source>
        <dbReference type="PROSITE-ProRule" id="PRU00126"/>
    </source>
</evidence>
<evidence type="ECO:0000255" key="4">
    <source>
        <dbReference type="PROSITE-ProRule" id="PRU01215"/>
    </source>
</evidence>
<evidence type="ECO:0000305" key="5"/>
<dbReference type="EMBL" id="CH476607">
    <property type="protein sequence ID" value="EAU30596.1"/>
    <property type="status" value="ALT_SEQ"/>
    <property type="molecule type" value="Genomic_DNA"/>
</dbReference>
<dbReference type="RefSeq" id="XP_001218081.1">
    <property type="nucleotide sequence ID" value="XM_001218080.1"/>
</dbReference>
<dbReference type="SMR" id="Q0CA25"/>
<dbReference type="STRING" id="341663.Q0CA25"/>
<dbReference type="EnsemblFungi" id="EAU30596">
    <property type="protein sequence ID" value="EAU30596"/>
    <property type="gene ID" value="ATEG_09459"/>
</dbReference>
<dbReference type="GeneID" id="4353767"/>
<dbReference type="eggNOG" id="KOG0396">
    <property type="taxonomic scope" value="Eukaryota"/>
</dbReference>
<dbReference type="OrthoDB" id="1933455at2759"/>
<dbReference type="Proteomes" id="UP000007963">
    <property type="component" value="Unassembled WGS sequence"/>
</dbReference>
<dbReference type="GO" id="GO:0005737">
    <property type="term" value="C:cytoplasm"/>
    <property type="evidence" value="ECO:0007669"/>
    <property type="project" value="UniProtKB-SubCell"/>
</dbReference>
<dbReference type="GO" id="GO:0034657">
    <property type="term" value="C:GID complex"/>
    <property type="evidence" value="ECO:0007669"/>
    <property type="project" value="TreeGrafter"/>
</dbReference>
<dbReference type="GO" id="GO:0005634">
    <property type="term" value="C:nucleus"/>
    <property type="evidence" value="ECO:0007669"/>
    <property type="project" value="UniProtKB-SubCell"/>
</dbReference>
<dbReference type="GO" id="GO:0061630">
    <property type="term" value="F:ubiquitin protein ligase activity"/>
    <property type="evidence" value="ECO:0007669"/>
    <property type="project" value="InterPro"/>
</dbReference>
<dbReference type="GO" id="GO:0008270">
    <property type="term" value="F:zinc ion binding"/>
    <property type="evidence" value="ECO:0007669"/>
    <property type="project" value="UniProtKB-KW"/>
</dbReference>
<dbReference type="GO" id="GO:0045721">
    <property type="term" value="P:negative regulation of gluconeogenesis"/>
    <property type="evidence" value="ECO:0007669"/>
    <property type="project" value="UniProtKB-ARBA"/>
</dbReference>
<dbReference type="GO" id="GO:0043161">
    <property type="term" value="P:proteasome-mediated ubiquitin-dependent protein catabolic process"/>
    <property type="evidence" value="ECO:0007669"/>
    <property type="project" value="InterPro"/>
</dbReference>
<dbReference type="InterPro" id="IPR013144">
    <property type="entry name" value="CRA_dom"/>
</dbReference>
<dbReference type="InterPro" id="IPR024964">
    <property type="entry name" value="CTLH/CRA"/>
</dbReference>
<dbReference type="InterPro" id="IPR006595">
    <property type="entry name" value="CTLH_C"/>
</dbReference>
<dbReference type="InterPro" id="IPR045098">
    <property type="entry name" value="Fyv10_fam"/>
</dbReference>
<dbReference type="InterPro" id="IPR006594">
    <property type="entry name" value="LisH"/>
</dbReference>
<dbReference type="InterPro" id="IPR044063">
    <property type="entry name" value="ZF_RING_GID"/>
</dbReference>
<dbReference type="PANTHER" id="PTHR12170:SF2">
    <property type="entry name" value="E3 UBIQUITIN-PROTEIN TRANSFERASE MAEA"/>
    <property type="match status" value="1"/>
</dbReference>
<dbReference type="PANTHER" id="PTHR12170">
    <property type="entry name" value="MACROPHAGE ERYTHROBLAST ATTACHER-RELATED"/>
    <property type="match status" value="1"/>
</dbReference>
<dbReference type="Pfam" id="PF10607">
    <property type="entry name" value="CTLH"/>
    <property type="match status" value="1"/>
</dbReference>
<dbReference type="SMART" id="SM00757">
    <property type="entry name" value="CRA"/>
    <property type="match status" value="1"/>
</dbReference>
<dbReference type="SMART" id="SM00668">
    <property type="entry name" value="CTLH"/>
    <property type="match status" value="1"/>
</dbReference>
<dbReference type="PROSITE" id="PS50897">
    <property type="entry name" value="CTLH"/>
    <property type="match status" value="1"/>
</dbReference>
<dbReference type="PROSITE" id="PS50896">
    <property type="entry name" value="LISH"/>
    <property type="match status" value="1"/>
</dbReference>
<dbReference type="PROSITE" id="PS51867">
    <property type="entry name" value="ZF_RING_GID"/>
    <property type="match status" value="1"/>
</dbReference>
<organism>
    <name type="scientific">Aspergillus terreus (strain NIH 2624 / FGSC A1156)</name>
    <dbReference type="NCBI Taxonomy" id="341663"/>
    <lineage>
        <taxon>Eukaryota</taxon>
        <taxon>Fungi</taxon>
        <taxon>Dikarya</taxon>
        <taxon>Ascomycota</taxon>
        <taxon>Pezizomycotina</taxon>
        <taxon>Eurotiomycetes</taxon>
        <taxon>Eurotiomycetidae</taxon>
        <taxon>Eurotiales</taxon>
        <taxon>Aspergillaceae</taxon>
        <taxon>Aspergillus</taxon>
        <taxon>Aspergillus subgen. Circumdati</taxon>
    </lineage>
</organism>
<feature type="chain" id="PRO_0000292453" description="Protein fyv10">
    <location>
        <begin position="1"/>
        <end position="406"/>
    </location>
</feature>
<feature type="domain" description="LisH" evidence="3">
    <location>
        <begin position="126"/>
        <end position="158"/>
    </location>
</feature>
<feature type="domain" description="CTLH" evidence="2">
    <location>
        <begin position="164"/>
        <end position="221"/>
    </location>
</feature>
<feature type="zinc finger region" description="RING-Gid-type" evidence="4">
    <location>
        <begin position="329"/>
        <end position="391"/>
    </location>
</feature>
<proteinExistence type="inferred from homology"/>
<reference key="1">
    <citation type="submission" date="2005-09" db="EMBL/GenBank/DDBJ databases">
        <title>Annotation of the Aspergillus terreus NIH2624 genome.</title>
        <authorList>
            <person name="Birren B.W."/>
            <person name="Lander E.S."/>
            <person name="Galagan J.E."/>
            <person name="Nusbaum C."/>
            <person name="Devon K."/>
            <person name="Henn M."/>
            <person name="Ma L.-J."/>
            <person name="Jaffe D.B."/>
            <person name="Butler J."/>
            <person name="Alvarez P."/>
            <person name="Gnerre S."/>
            <person name="Grabherr M."/>
            <person name="Kleber M."/>
            <person name="Mauceli E.W."/>
            <person name="Brockman W."/>
            <person name="Rounsley S."/>
            <person name="Young S.K."/>
            <person name="LaButti K."/>
            <person name="Pushparaj V."/>
            <person name="DeCaprio D."/>
            <person name="Crawford M."/>
            <person name="Koehrsen M."/>
            <person name="Engels R."/>
            <person name="Montgomery P."/>
            <person name="Pearson M."/>
            <person name="Howarth C."/>
            <person name="Larson L."/>
            <person name="Luoma S."/>
            <person name="White J."/>
            <person name="Alvarado L."/>
            <person name="Kodira C.D."/>
            <person name="Zeng Q."/>
            <person name="Oleary S."/>
            <person name="Yandava C."/>
            <person name="Denning D.W."/>
            <person name="Nierman W.C."/>
            <person name="Milne T."/>
            <person name="Madden K."/>
        </authorList>
    </citation>
    <scope>NUCLEOTIDE SEQUENCE [LARGE SCALE GENOMIC DNA]</scope>
    <source>
        <strain>NIH 2624 / FGSC A1156</strain>
    </source>
</reference>
<keyword id="KW-0963">Cytoplasm</keyword>
<keyword id="KW-0479">Metal-binding</keyword>
<keyword id="KW-0539">Nucleus</keyword>
<keyword id="KW-1185">Reference proteome</keyword>
<keyword id="KW-0862">Zinc</keyword>
<keyword id="KW-0863">Zinc-finger</keyword>
<protein>
    <recommendedName>
        <fullName>Protein fyv10</fullName>
    </recommendedName>
</protein>
<accession>Q0CA25</accession>
<name>FYV10_ASPTN</name>
<gene>
    <name type="primary">fyv10</name>
    <name type="ORF">ATEG_09459</name>
</gene>
<sequence>MAAELTSTKLNAENHLLLDQPLLRLPHELARRNFKSVQRLVEREKEYVLPALKETANASLSQSQTPDQTLAALDAMISRMQGLKRKMENLQQEEKKIHAQSRKRIQHLECLHHIPSLADVKYDQWSRIRLDRLIVDQMLRSGYTESAQQLAQEKDIEDLVDLNVFIQCQRIAESLRRGETKDALQWCNENKAALRKSQYNLEFELRLQQYIEMIRTGDKGKLVEARAHARKYLTPFIETQSAEIHRAAGLLAFPKDTKAEPYKSMYAPERWHHLSDLFVRTHHELLSLPSWPLLHIALSAGLSALKTPSCHSAYTSPSSNSLSTTTSVCPICSTELNELARNMPYAHHTKSYVESDPIVLPNGRIYGQQRLLEMSKKVGCVEAGKVKDPTTGEVFDESEMKKVYIM</sequence>